<protein>
    <recommendedName>
        <fullName>F-box only protein 32</fullName>
    </recommendedName>
    <alternativeName>
        <fullName>Atrogin-1</fullName>
    </alternativeName>
    <alternativeName>
        <fullName>Muscle atrophy F-box protein</fullName>
        <shortName>MAFbx</shortName>
    </alternativeName>
</protein>
<dbReference type="EMBL" id="AY059629">
    <property type="protein sequence ID" value="AAL16407.1"/>
    <property type="molecule type" value="mRNA"/>
</dbReference>
<dbReference type="EMBL" id="AJ420108">
    <property type="protein sequence ID" value="CAD12251.1"/>
    <property type="molecule type" value="mRNA"/>
</dbReference>
<dbReference type="EMBL" id="EF143260">
    <property type="protein sequence ID" value="ABO37797.1"/>
    <property type="molecule type" value="mRNA"/>
</dbReference>
<dbReference type="EMBL" id="AK056986">
    <property type="protein sequence ID" value="BAB71333.1"/>
    <property type="molecule type" value="mRNA"/>
</dbReference>
<dbReference type="EMBL" id="AC090193">
    <property type="status" value="NOT_ANNOTATED_CDS"/>
    <property type="molecule type" value="Genomic_DNA"/>
</dbReference>
<dbReference type="CCDS" id="CCDS56553.1">
    <molecule id="Q969P5-2"/>
</dbReference>
<dbReference type="CCDS" id="CCDS6345.1">
    <molecule id="Q969P5-1"/>
</dbReference>
<dbReference type="RefSeq" id="NP_001229392.1">
    <molecule id="Q969P5-2"/>
    <property type="nucleotide sequence ID" value="NM_001242463.2"/>
</dbReference>
<dbReference type="RefSeq" id="NP_478136.1">
    <molecule id="Q969P5-1"/>
    <property type="nucleotide sequence ID" value="NM_058229.4"/>
</dbReference>
<dbReference type="BioGRID" id="125395">
    <property type="interactions" value="250"/>
</dbReference>
<dbReference type="ComplexPortal" id="CPX-7972">
    <property type="entry name" value="SCF E3 ubiquitin ligase complex, FBXO32 variant"/>
</dbReference>
<dbReference type="FunCoup" id="Q969P5">
    <property type="interactions" value="1837"/>
</dbReference>
<dbReference type="IntAct" id="Q969P5">
    <property type="interactions" value="8"/>
</dbReference>
<dbReference type="MINT" id="Q969P5"/>
<dbReference type="STRING" id="9606.ENSP00000428205"/>
<dbReference type="GlyGen" id="Q969P5">
    <property type="glycosylation" value="1 site, 1 O-linked glycan (1 site)"/>
</dbReference>
<dbReference type="iPTMnet" id="Q969P5"/>
<dbReference type="PhosphoSitePlus" id="Q969P5"/>
<dbReference type="BioMuta" id="FBXO32"/>
<dbReference type="DMDM" id="20177894"/>
<dbReference type="jPOST" id="Q969P5"/>
<dbReference type="MassIVE" id="Q969P5"/>
<dbReference type="PaxDb" id="9606-ENSP00000428205"/>
<dbReference type="PeptideAtlas" id="Q969P5"/>
<dbReference type="ProteomicsDB" id="75810">
    <molecule id="Q969P5-1"/>
</dbReference>
<dbReference type="ProteomicsDB" id="75811">
    <molecule id="Q969P5-2"/>
</dbReference>
<dbReference type="Pumba" id="Q969P5"/>
<dbReference type="Antibodypedia" id="27004">
    <property type="antibodies" value="333 antibodies from 36 providers"/>
</dbReference>
<dbReference type="DNASU" id="114907"/>
<dbReference type="Ensembl" id="ENST00000443022.2">
    <molecule id="Q969P5-2"/>
    <property type="protein sequence ID" value="ENSP00000390790.2"/>
    <property type="gene ID" value="ENSG00000156804.7"/>
</dbReference>
<dbReference type="Ensembl" id="ENST00000517956.5">
    <molecule id="Q969P5-1"/>
    <property type="protein sequence ID" value="ENSP00000428205.1"/>
    <property type="gene ID" value="ENSG00000156804.7"/>
</dbReference>
<dbReference type="GeneID" id="114907"/>
<dbReference type="KEGG" id="hsa:114907"/>
<dbReference type="MANE-Select" id="ENST00000517956.5">
    <property type="protein sequence ID" value="ENSP00000428205.1"/>
    <property type="RefSeq nucleotide sequence ID" value="NM_058229.4"/>
    <property type="RefSeq protein sequence ID" value="NP_478136.1"/>
</dbReference>
<dbReference type="UCSC" id="uc003yqr.4">
    <molecule id="Q969P5-1"/>
    <property type="organism name" value="human"/>
</dbReference>
<dbReference type="AGR" id="HGNC:16731"/>
<dbReference type="CTD" id="114907"/>
<dbReference type="DisGeNET" id="114907"/>
<dbReference type="GeneCards" id="FBXO32"/>
<dbReference type="HGNC" id="HGNC:16731">
    <property type="gene designation" value="FBXO32"/>
</dbReference>
<dbReference type="HPA" id="ENSG00000156804">
    <property type="expression patterns" value="Tissue enriched (skeletal)"/>
</dbReference>
<dbReference type="MalaCards" id="FBXO32"/>
<dbReference type="MIM" id="606604">
    <property type="type" value="gene"/>
</dbReference>
<dbReference type="neXtProt" id="NX_Q969P5"/>
<dbReference type="OpenTargets" id="ENSG00000156804"/>
<dbReference type="PharmGKB" id="PA28043"/>
<dbReference type="VEuPathDB" id="HostDB:ENSG00000156804"/>
<dbReference type="eggNOG" id="KOG3926">
    <property type="taxonomic scope" value="Eukaryota"/>
</dbReference>
<dbReference type="GeneTree" id="ENSGT00390000004915"/>
<dbReference type="HOGENOM" id="CLU_065667_0_0_1"/>
<dbReference type="InParanoid" id="Q969P5"/>
<dbReference type="OMA" id="NINTWVH"/>
<dbReference type="OrthoDB" id="9991467at2759"/>
<dbReference type="PAN-GO" id="Q969P5">
    <property type="GO annotations" value="4 GO annotations based on evolutionary models"/>
</dbReference>
<dbReference type="PhylomeDB" id="Q969P5"/>
<dbReference type="TreeFam" id="TF313070"/>
<dbReference type="PathwayCommons" id="Q969P5"/>
<dbReference type="Reactome" id="R-HSA-8951664">
    <property type="pathway name" value="Neddylation"/>
</dbReference>
<dbReference type="Reactome" id="R-HSA-9615017">
    <property type="pathway name" value="FOXO-mediated transcription of oxidative stress, metabolic and neuronal genes"/>
</dbReference>
<dbReference type="Reactome" id="R-HSA-983168">
    <property type="pathway name" value="Antigen processing: Ubiquitination &amp; Proteasome degradation"/>
</dbReference>
<dbReference type="SignaLink" id="Q969P5"/>
<dbReference type="SIGNOR" id="Q969P5"/>
<dbReference type="UniPathway" id="UPA00143"/>
<dbReference type="BioGRID-ORCS" id="114907">
    <property type="hits" value="13 hits in 1187 CRISPR screens"/>
</dbReference>
<dbReference type="ChiTaRS" id="FBXO32">
    <property type="organism name" value="human"/>
</dbReference>
<dbReference type="GeneWiki" id="FBXO32"/>
<dbReference type="GenomeRNAi" id="114907"/>
<dbReference type="Pharos" id="Q969P5">
    <property type="development level" value="Tbio"/>
</dbReference>
<dbReference type="PRO" id="PR:Q969P5"/>
<dbReference type="Proteomes" id="UP000005640">
    <property type="component" value="Chromosome 8"/>
</dbReference>
<dbReference type="RNAct" id="Q969P5">
    <property type="molecule type" value="protein"/>
</dbReference>
<dbReference type="Bgee" id="ENSG00000156804">
    <property type="expression patterns" value="Expressed in cardiac muscle of right atrium and 182 other cell types or tissues"/>
</dbReference>
<dbReference type="ExpressionAtlas" id="Q969P5">
    <property type="expression patterns" value="baseline and differential"/>
</dbReference>
<dbReference type="GO" id="GO:0005737">
    <property type="term" value="C:cytoplasm"/>
    <property type="evidence" value="ECO:0000314"/>
    <property type="project" value="UniProtKB"/>
</dbReference>
<dbReference type="GO" id="GO:0005829">
    <property type="term" value="C:cytosol"/>
    <property type="evidence" value="ECO:0000314"/>
    <property type="project" value="HPA"/>
</dbReference>
<dbReference type="GO" id="GO:0005654">
    <property type="term" value="C:nucleoplasm"/>
    <property type="evidence" value="ECO:0000314"/>
    <property type="project" value="HPA"/>
</dbReference>
<dbReference type="GO" id="GO:0005634">
    <property type="term" value="C:nucleus"/>
    <property type="evidence" value="ECO:0000318"/>
    <property type="project" value="GO_Central"/>
</dbReference>
<dbReference type="GO" id="GO:0019005">
    <property type="term" value="C:SCF ubiquitin ligase complex"/>
    <property type="evidence" value="ECO:0000314"/>
    <property type="project" value="UniProtKB"/>
</dbReference>
<dbReference type="GO" id="GO:0030018">
    <property type="term" value="C:Z disc"/>
    <property type="evidence" value="ECO:0007669"/>
    <property type="project" value="Ensembl"/>
</dbReference>
<dbReference type="GO" id="GO:0071549">
    <property type="term" value="P:cellular response to dexamethasone stimulus"/>
    <property type="evidence" value="ECO:0007669"/>
    <property type="project" value="Ensembl"/>
</dbReference>
<dbReference type="GO" id="GO:0016567">
    <property type="term" value="P:protein ubiquitination"/>
    <property type="evidence" value="ECO:0000314"/>
    <property type="project" value="UniProtKB"/>
</dbReference>
<dbReference type="GO" id="GO:0014894">
    <property type="term" value="P:response to denervation involved in regulation of muscle adaptation"/>
    <property type="evidence" value="ECO:0000250"/>
    <property type="project" value="UniProtKB"/>
</dbReference>
<dbReference type="CDD" id="cd22103">
    <property type="entry name" value="F-box_FBXO32"/>
    <property type="match status" value="1"/>
</dbReference>
<dbReference type="FunFam" id="1.20.1280.50:FF:000017">
    <property type="entry name" value="F-box only protein 32"/>
    <property type="match status" value="1"/>
</dbReference>
<dbReference type="Gene3D" id="1.20.1280.50">
    <property type="match status" value="1"/>
</dbReference>
<dbReference type="InterPro" id="IPR036047">
    <property type="entry name" value="F-box-like_dom_sf"/>
</dbReference>
<dbReference type="InterPro" id="IPR040394">
    <property type="entry name" value="FBX25/32"/>
</dbReference>
<dbReference type="PANTHER" id="PTHR13123:SF6">
    <property type="entry name" value="F-BOX ONLY PROTEIN 32"/>
    <property type="match status" value="1"/>
</dbReference>
<dbReference type="PANTHER" id="PTHR13123">
    <property type="entry name" value="LD30288P"/>
    <property type="match status" value="1"/>
</dbReference>
<dbReference type="SUPFAM" id="SSF81383">
    <property type="entry name" value="F-box domain"/>
    <property type="match status" value="1"/>
</dbReference>
<reference key="1">
    <citation type="journal article" date="2001" name="Science">
        <title>Identification of ubiquitin ligases required for skeletal muscle atrophy.</title>
        <authorList>
            <person name="Bodine S.C."/>
            <person name="Latres E."/>
            <person name="Baumhueter S."/>
            <person name="Lai V.K.-M."/>
            <person name="Nunez L."/>
            <person name="Clarke B.A."/>
            <person name="Poueymirou W.T."/>
            <person name="Panaro F.J."/>
            <person name="Na E."/>
            <person name="Dharmarajan K."/>
            <person name="Pan Z.-Q."/>
            <person name="Valenzuela D.M."/>
            <person name="DeChiara T.M."/>
            <person name="Stitt T.N."/>
            <person name="Yancopoulos G.D."/>
            <person name="Glass D.J."/>
        </authorList>
    </citation>
    <scope>NUCLEOTIDE SEQUENCE [MRNA] (ISOFORM 1)</scope>
    <source>
        <tissue>Skeletal muscle</tissue>
    </source>
</reference>
<reference key="2">
    <citation type="submission" date="2001-11" db="EMBL/GenBank/DDBJ databases">
        <title>The FBXO32 gene encodes a novel F-box protein selectively expressed in muscle tissue.</title>
        <authorList>
            <person name="Sivertsen E.A."/>
            <person name="Aasheim H.-C."/>
        </authorList>
    </citation>
    <scope>NUCLEOTIDE SEQUENCE [MRNA] (ISOFORM 1)</scope>
</reference>
<reference key="3">
    <citation type="submission" date="2006-11" db="EMBL/GenBank/DDBJ databases">
        <title>Atrogin 1 expression in human DMD muscle.</title>
        <authorList>
            <person name="Pescatori M."/>
            <person name="Bugli F."/>
            <person name="Sali M."/>
            <person name="Tonali P.A."/>
            <person name="Fadda G."/>
            <person name="Tasca G."/>
            <person name="Ricci E."/>
        </authorList>
    </citation>
    <scope>NUCLEOTIDE SEQUENCE [MRNA] (ISOFORM 2)</scope>
</reference>
<reference key="4">
    <citation type="journal article" date="2004" name="Nat. Genet.">
        <title>Complete sequencing and characterization of 21,243 full-length human cDNAs.</title>
        <authorList>
            <person name="Ota T."/>
            <person name="Suzuki Y."/>
            <person name="Nishikawa T."/>
            <person name="Otsuki T."/>
            <person name="Sugiyama T."/>
            <person name="Irie R."/>
            <person name="Wakamatsu A."/>
            <person name="Hayashi K."/>
            <person name="Sato H."/>
            <person name="Nagai K."/>
            <person name="Kimura K."/>
            <person name="Makita H."/>
            <person name="Sekine M."/>
            <person name="Obayashi M."/>
            <person name="Nishi T."/>
            <person name="Shibahara T."/>
            <person name="Tanaka T."/>
            <person name="Ishii S."/>
            <person name="Yamamoto J."/>
            <person name="Saito K."/>
            <person name="Kawai Y."/>
            <person name="Isono Y."/>
            <person name="Nakamura Y."/>
            <person name="Nagahari K."/>
            <person name="Murakami K."/>
            <person name="Yasuda T."/>
            <person name="Iwayanagi T."/>
            <person name="Wagatsuma M."/>
            <person name="Shiratori A."/>
            <person name="Sudo H."/>
            <person name="Hosoiri T."/>
            <person name="Kaku Y."/>
            <person name="Kodaira H."/>
            <person name="Kondo H."/>
            <person name="Sugawara M."/>
            <person name="Takahashi M."/>
            <person name="Kanda K."/>
            <person name="Yokoi T."/>
            <person name="Furuya T."/>
            <person name="Kikkawa E."/>
            <person name="Omura Y."/>
            <person name="Abe K."/>
            <person name="Kamihara K."/>
            <person name="Katsuta N."/>
            <person name="Sato K."/>
            <person name="Tanikawa M."/>
            <person name="Yamazaki M."/>
            <person name="Ninomiya K."/>
            <person name="Ishibashi T."/>
            <person name="Yamashita H."/>
            <person name="Murakawa K."/>
            <person name="Fujimori K."/>
            <person name="Tanai H."/>
            <person name="Kimata M."/>
            <person name="Watanabe M."/>
            <person name="Hiraoka S."/>
            <person name="Chiba Y."/>
            <person name="Ishida S."/>
            <person name="Ono Y."/>
            <person name="Takiguchi S."/>
            <person name="Watanabe S."/>
            <person name="Yosida M."/>
            <person name="Hotuta T."/>
            <person name="Kusano J."/>
            <person name="Kanehori K."/>
            <person name="Takahashi-Fujii A."/>
            <person name="Hara H."/>
            <person name="Tanase T.-O."/>
            <person name="Nomura Y."/>
            <person name="Togiya S."/>
            <person name="Komai F."/>
            <person name="Hara R."/>
            <person name="Takeuchi K."/>
            <person name="Arita M."/>
            <person name="Imose N."/>
            <person name="Musashino K."/>
            <person name="Yuuki H."/>
            <person name="Oshima A."/>
            <person name="Sasaki N."/>
            <person name="Aotsuka S."/>
            <person name="Yoshikawa Y."/>
            <person name="Matsunawa H."/>
            <person name="Ichihara T."/>
            <person name="Shiohata N."/>
            <person name="Sano S."/>
            <person name="Moriya S."/>
            <person name="Momiyama H."/>
            <person name="Satoh N."/>
            <person name="Takami S."/>
            <person name="Terashima Y."/>
            <person name="Suzuki O."/>
            <person name="Nakagawa S."/>
            <person name="Senoh A."/>
            <person name="Mizoguchi H."/>
            <person name="Goto Y."/>
            <person name="Shimizu F."/>
            <person name="Wakebe H."/>
            <person name="Hishigaki H."/>
            <person name="Watanabe T."/>
            <person name="Sugiyama A."/>
            <person name="Takemoto M."/>
            <person name="Kawakami B."/>
            <person name="Yamazaki M."/>
            <person name="Watanabe K."/>
            <person name="Kumagai A."/>
            <person name="Itakura S."/>
            <person name="Fukuzumi Y."/>
            <person name="Fujimori Y."/>
            <person name="Komiyama M."/>
            <person name="Tashiro H."/>
            <person name="Tanigami A."/>
            <person name="Fujiwara T."/>
            <person name="Ono T."/>
            <person name="Yamada K."/>
            <person name="Fujii Y."/>
            <person name="Ozaki K."/>
            <person name="Hirao M."/>
            <person name="Ohmori Y."/>
            <person name="Kawabata A."/>
            <person name="Hikiji T."/>
            <person name="Kobatake N."/>
            <person name="Inagaki H."/>
            <person name="Ikema Y."/>
            <person name="Okamoto S."/>
            <person name="Okitani R."/>
            <person name="Kawakami T."/>
            <person name="Noguchi S."/>
            <person name="Itoh T."/>
            <person name="Shigeta K."/>
            <person name="Senba T."/>
            <person name="Matsumura K."/>
            <person name="Nakajima Y."/>
            <person name="Mizuno T."/>
            <person name="Morinaga M."/>
            <person name="Sasaki M."/>
            <person name="Togashi T."/>
            <person name="Oyama M."/>
            <person name="Hata H."/>
            <person name="Watanabe M."/>
            <person name="Komatsu T."/>
            <person name="Mizushima-Sugano J."/>
            <person name="Satoh T."/>
            <person name="Shirai Y."/>
            <person name="Takahashi Y."/>
            <person name="Nakagawa K."/>
            <person name="Okumura K."/>
            <person name="Nagase T."/>
            <person name="Nomura N."/>
            <person name="Kikuchi H."/>
            <person name="Masuho Y."/>
            <person name="Yamashita R."/>
            <person name="Nakai K."/>
            <person name="Yada T."/>
            <person name="Nakamura Y."/>
            <person name="Ohara O."/>
            <person name="Isogai T."/>
            <person name="Sugano S."/>
        </authorList>
    </citation>
    <scope>NUCLEOTIDE SEQUENCE [LARGE SCALE MRNA] (ISOFORM 1)</scope>
    <source>
        <tissue>Skeletal muscle</tissue>
    </source>
</reference>
<reference key="5">
    <citation type="journal article" date="2006" name="Nature">
        <title>DNA sequence and analysis of human chromosome 8.</title>
        <authorList>
            <person name="Nusbaum C."/>
            <person name="Mikkelsen T.S."/>
            <person name="Zody M.C."/>
            <person name="Asakawa S."/>
            <person name="Taudien S."/>
            <person name="Garber M."/>
            <person name="Kodira C.D."/>
            <person name="Schueler M.G."/>
            <person name="Shimizu A."/>
            <person name="Whittaker C.A."/>
            <person name="Chang J.L."/>
            <person name="Cuomo C.A."/>
            <person name="Dewar K."/>
            <person name="FitzGerald M.G."/>
            <person name="Yang X."/>
            <person name="Allen N.R."/>
            <person name="Anderson S."/>
            <person name="Asakawa T."/>
            <person name="Blechschmidt K."/>
            <person name="Bloom T."/>
            <person name="Borowsky M.L."/>
            <person name="Butler J."/>
            <person name="Cook A."/>
            <person name="Corum B."/>
            <person name="DeArellano K."/>
            <person name="DeCaprio D."/>
            <person name="Dooley K.T."/>
            <person name="Dorris L. III"/>
            <person name="Engels R."/>
            <person name="Gloeckner G."/>
            <person name="Hafez N."/>
            <person name="Hagopian D.S."/>
            <person name="Hall J.L."/>
            <person name="Ishikawa S.K."/>
            <person name="Jaffe D.B."/>
            <person name="Kamat A."/>
            <person name="Kudoh J."/>
            <person name="Lehmann R."/>
            <person name="Lokitsang T."/>
            <person name="Macdonald P."/>
            <person name="Major J.E."/>
            <person name="Matthews C.D."/>
            <person name="Mauceli E."/>
            <person name="Menzel U."/>
            <person name="Mihalev A.H."/>
            <person name="Minoshima S."/>
            <person name="Murayama Y."/>
            <person name="Naylor J.W."/>
            <person name="Nicol R."/>
            <person name="Nguyen C."/>
            <person name="O'Leary S.B."/>
            <person name="O'Neill K."/>
            <person name="Parker S.C.J."/>
            <person name="Polley A."/>
            <person name="Raymond C.K."/>
            <person name="Reichwald K."/>
            <person name="Rodriguez J."/>
            <person name="Sasaki T."/>
            <person name="Schilhabel M."/>
            <person name="Siddiqui R."/>
            <person name="Smith C.L."/>
            <person name="Sneddon T.P."/>
            <person name="Talamas J.A."/>
            <person name="Tenzin P."/>
            <person name="Topham K."/>
            <person name="Venkataraman V."/>
            <person name="Wen G."/>
            <person name="Yamazaki S."/>
            <person name="Young S.K."/>
            <person name="Zeng Q."/>
            <person name="Zimmer A.R."/>
            <person name="Rosenthal A."/>
            <person name="Birren B.W."/>
            <person name="Platzer M."/>
            <person name="Shimizu N."/>
            <person name="Lander E.S."/>
        </authorList>
    </citation>
    <scope>NUCLEOTIDE SEQUENCE [LARGE SCALE GENOMIC DNA]</scope>
</reference>
<reference key="6">
    <citation type="journal article" date="2005" name="J. Biol. Chem.">
        <title>Degradation of MyoD mediated by the SCF (MAFbx) ubiquitin ligase.</title>
        <authorList>
            <person name="Tintignac L.A."/>
            <person name="Lagirand J."/>
            <person name="Batonnet S."/>
            <person name="Sirri V."/>
            <person name="Leibovitch M.P."/>
            <person name="Leibovitch S.A."/>
        </authorList>
    </citation>
    <scope>RECONSTITUTION OF THE SCF(FBXO32) COMPLEX</scope>
    <scope>FUNCTION IN UBIQUITINATION OF MYOD1</scope>
</reference>
<reference key="7">
    <citation type="journal article" date="2012" name="FEBS Lett.">
        <title>Identification of essential sequences for cellular localization in the muscle-specific ubiquitin E3 ligase MAFbx/Atrogin 1.</title>
        <authorList>
            <person name="Julie L.C."/>
            <person name="Sabrina B.P."/>
            <person name="Marie-Pierre L."/>
            <person name="Leibovitch S.A."/>
        </authorList>
    </citation>
    <scope>SUBCELLULAR LOCATION</scope>
    <scope>NUCLEAR LOCALIZATION SIGNALS</scope>
    <scope>MUTAGENESIS OF LEU-169</scope>
</reference>
<reference key="8">
    <citation type="journal article" date="2016" name="BMC Med. Genet.">
        <title>A substitution mutation in cardiac ubiquitin ligase, FBXO32, is associated with an autosomal recessive form of dilated cardiomyopathy.</title>
        <authorList>
            <person name="Al-Hassnan Z.N."/>
            <person name="Shinwari Z.M."/>
            <person name="Wakil S.M."/>
            <person name="Tulbah S."/>
            <person name="Mohammed S."/>
            <person name="Rahbeeni Z."/>
            <person name="Alghamdi M."/>
            <person name="Rababh M."/>
            <person name="Colak D."/>
            <person name="Kaya N."/>
            <person name="Al-Fayyadh M."/>
            <person name="Alburaiki J."/>
        </authorList>
    </citation>
    <scope>INVOLVEMENT IN DCM</scope>
    <scope>VARIANT ARG-243</scope>
    <scope>SUBCELLULAR LOCATION</scope>
</reference>
<reference key="9">
    <citation type="journal article" date="2016" name="Genome Biol.">
        <title>FBXO32, encoding a member of the SCF complex, is mutated in dilated cardiomyopathy.</title>
        <authorList>
            <person name="Al-Yacoub N."/>
            <person name="Shaheen R."/>
            <person name="Awad S.M."/>
            <person name="Kunhi M."/>
            <person name="Dzimiri N."/>
            <person name="Nguyen H.C."/>
            <person name="Xiong Y."/>
            <person name="Al-Buraiki J."/>
            <person name="Al-Habeeb W."/>
            <person name="Alkuraya F.S."/>
            <person name="Poizat C."/>
        </authorList>
    </citation>
    <scope>INVOLVEMENT IN DCM</scope>
    <scope>VARIANT ARG-243</scope>
    <scope>CHARACTERIZATION OF VARIANT ARG-243</scope>
    <scope>SUBUNIT</scope>
</reference>
<sequence length="355" mass="41637">MPFLGQDWRSPGQNWVKTADGWKRFLDEKSGSFVSDLSSYCNKEVYNKENLFNSLNYDVAAKKRKKDMLNSKTKTQYFHQEKWIYVHKGSTKERHGYCTLGEAFNRLDFSTAILDSRRFNYVVRLLELIAKSQLTSLSGIAQKNFMNILEKVVLKVLEDQQNIRLIRELLQTLYTSLCTLVQRVGKSVLVGNINMWVYRMETILHWQQQLNNIQITRPAFKGLTFTDLPLCLQLNIMQRLSDGRDLVSLGQAAPDLHVLSEDRLLWKKLCQYHFSERQIRKRLILSDKGQLDWKKMYFKLVRCYPRKEQYGDTLQLCKHCHILSWKGTDHPCTANNPESCSVSLSPQDFINLFKF</sequence>
<name>FBX32_HUMAN</name>
<organism>
    <name type="scientific">Homo sapiens</name>
    <name type="common">Human</name>
    <dbReference type="NCBI Taxonomy" id="9606"/>
    <lineage>
        <taxon>Eukaryota</taxon>
        <taxon>Metazoa</taxon>
        <taxon>Chordata</taxon>
        <taxon>Craniata</taxon>
        <taxon>Vertebrata</taxon>
        <taxon>Euteleostomi</taxon>
        <taxon>Mammalia</taxon>
        <taxon>Eutheria</taxon>
        <taxon>Euarchontoglires</taxon>
        <taxon>Primates</taxon>
        <taxon>Haplorrhini</taxon>
        <taxon>Catarrhini</taxon>
        <taxon>Hominidae</taxon>
        <taxon>Homo</taxon>
    </lineage>
</organism>
<feature type="chain" id="PRO_0000119922" description="F-box only protein 32">
    <location>
        <begin position="1"/>
        <end position="355"/>
    </location>
</feature>
<feature type="domain" description="F-box">
    <location>
        <begin position="223"/>
        <end position="271"/>
    </location>
</feature>
<feature type="short sequence motif" description="Nuclear localization signal" evidence="2">
    <location>
        <begin position="62"/>
        <end position="67"/>
    </location>
</feature>
<feature type="short sequence motif" description="Nuclear export signal">
    <location>
        <begin position="169"/>
        <end position="173"/>
    </location>
</feature>
<feature type="short sequence motif" description="Bipartite nuclear localization signal">
    <location>
        <begin position="280"/>
        <end position="295"/>
    </location>
</feature>
<feature type="splice variant" id="VSP_042744" description="In isoform 2." evidence="5">
    <location>
        <begin position="124"/>
        <end position="216"/>
    </location>
</feature>
<feature type="sequence variant" id="VAR_049045" description="In dbSNP:rs6988591.">
    <original>N</original>
    <variation>S</variation>
    <location>
        <position position="56"/>
    </location>
</feature>
<feature type="sequence variant" id="VAR_049046" description="In dbSNP:rs11786471.">
    <original>G</original>
    <variation>A</variation>
    <location>
        <position position="89"/>
    </location>
</feature>
<feature type="sequence variant" id="VAR_076453" description="Found in patients with familial dilated cardiomyopathy; likely pathogenic; impairs the formation of SCF complex; reduced ubiquitination of cellular proteins; dbSNP:rs771939133." evidence="3 4">
    <original>G</original>
    <variation>R</variation>
    <location>
        <position position="243"/>
    </location>
</feature>
<feature type="mutagenesis site" description="Significantly increases nuclear localization." evidence="2">
    <original>L</original>
    <variation>Q</variation>
    <location>
        <position position="169"/>
    </location>
</feature>
<proteinExistence type="evidence at protein level"/>
<comment type="function">
    <text evidence="1">Substrate recognition component of a SCF (SKP1-CUL1-F-box protein) E3 ubiquitin-protein ligase complex which mediates the ubiquitination and subsequent proteasomal degradation of target proteins. Probably recognizes and binds to phosphorylated target proteins during skeletal muscle atrophy. Recognizes TERF1.</text>
</comment>
<comment type="pathway">
    <text>Protein modification; protein ubiquitination.</text>
</comment>
<comment type="subunit">
    <text evidence="3">Part of the SCF (SKP1-CUL1-F-box) E3 ubiquitin-protein ligase complex SCF(FBXO32) formed of CUL1, SKP1, RBX1 and FBXO32.</text>
</comment>
<comment type="interaction">
    <interactant intactId="EBI-2932534">
        <id>Q969P5</id>
    </interactant>
    <interactant intactId="EBI-711990">
        <id>O00303</id>
        <label>EIF3F</label>
    </interactant>
    <organismsDiffer>false</organismsDiffer>
    <experiments>7</experiments>
</comment>
<comment type="subcellular location">
    <subcellularLocation>
        <location evidence="2 4">Cytoplasm</location>
    </subcellularLocation>
    <subcellularLocation>
        <location evidence="2">Nucleus</location>
    </subcellularLocation>
    <text>Shuttles between cytoplasm and the nucleus.</text>
</comment>
<comment type="alternative products">
    <event type="alternative splicing"/>
    <isoform>
        <id>Q969P5-1</id>
        <name>1</name>
        <sequence type="displayed"/>
    </isoform>
    <isoform>
        <id>Q969P5-2</id>
        <name>2</name>
        <sequence type="described" ref="VSP_042744"/>
    </isoform>
</comment>
<comment type="tissue specificity">
    <text>Specifically expressed in cardiac and skeletal muscle.</text>
</comment>
<comment type="disease">
    <text evidence="3 4">Defects in FBXO32 are associated with susceptibility to dilated cardiomyopathy (DCM). A disorder characterized by ventricular and impaired systolic function, resulting in heart failure and arrhythmia. Patient are at risk of premature death.</text>
</comment>
<evidence type="ECO:0000269" key="1">
    <source>
    </source>
</evidence>
<evidence type="ECO:0000269" key="2">
    <source>
    </source>
</evidence>
<evidence type="ECO:0000269" key="3">
    <source>
    </source>
</evidence>
<evidence type="ECO:0000269" key="4">
    <source>
    </source>
</evidence>
<evidence type="ECO:0000303" key="5">
    <source ref="3"/>
</evidence>
<gene>
    <name type="primary">FBXO32</name>
</gene>
<accession>Q969P5</accession>
<accession>A4KYM0</accession>
<keyword id="KW-0025">Alternative splicing</keyword>
<keyword id="KW-0963">Cytoplasm</keyword>
<keyword id="KW-0225">Disease variant</keyword>
<keyword id="KW-0539">Nucleus</keyword>
<keyword id="KW-1267">Proteomics identification</keyword>
<keyword id="KW-1185">Reference proteome</keyword>
<keyword id="KW-0833">Ubl conjugation pathway</keyword>